<accession>B7NTN3</accession>
<name>PURA_ECO7I</name>
<organism>
    <name type="scientific">Escherichia coli O7:K1 (strain IAI39 / ExPEC)</name>
    <dbReference type="NCBI Taxonomy" id="585057"/>
    <lineage>
        <taxon>Bacteria</taxon>
        <taxon>Pseudomonadati</taxon>
        <taxon>Pseudomonadota</taxon>
        <taxon>Gammaproteobacteria</taxon>
        <taxon>Enterobacterales</taxon>
        <taxon>Enterobacteriaceae</taxon>
        <taxon>Escherichia</taxon>
    </lineage>
</organism>
<sequence length="432" mass="47345">MGNNVVVLGTQWGDEGKGKIVDLLTERAKYVVRYQGGHNAGHTLVINGEKTVLHLIPSGILRENVTSIIGNGVVLSPAALMKEMKELEDRGIPVRERLLLSEACPLILDYHVALDNAREKARGAKAIGTTGRGIGPAYEDKVARRGLRVGDLFDKETFAEKLKEVMEYHNFQLVNYYKAEAVDYQKVLDDTMAVADILTSMVVDVSDLLDQARQRGDFVMFEGAQGTLLDIDHGTYPYVTSSNTTAGGVATGSGLGPRYVDYVLGILKAYSTRVGAGPFPTELFDETGEFLCKQGNEFGATTGRRRRTGWLDTVAVRRAVQLNSLSGFCLTKLDVLDGLKEVKLCVAYRMPDGREVTTTPLAADDWKGVEPIYETMPGWSESTFGVKDRSGLPQAALNYIKRIEELTGVPIDIISTGPDRTETMILRDPFDA</sequence>
<keyword id="KW-0963">Cytoplasm</keyword>
<keyword id="KW-0342">GTP-binding</keyword>
<keyword id="KW-0436">Ligase</keyword>
<keyword id="KW-0460">Magnesium</keyword>
<keyword id="KW-0479">Metal-binding</keyword>
<keyword id="KW-0547">Nucleotide-binding</keyword>
<keyword id="KW-0658">Purine biosynthesis</keyword>
<protein>
    <recommendedName>
        <fullName evidence="1">Adenylosuccinate synthetase</fullName>
        <shortName evidence="1">AMPSase</shortName>
        <shortName evidence="1">AdSS</shortName>
        <ecNumber evidence="1">6.3.4.4</ecNumber>
    </recommendedName>
    <alternativeName>
        <fullName evidence="1">IMP--aspartate ligase</fullName>
    </alternativeName>
</protein>
<proteinExistence type="inferred from homology"/>
<feature type="chain" id="PRO_1000194756" description="Adenylosuccinate synthetase">
    <location>
        <begin position="1"/>
        <end position="432"/>
    </location>
</feature>
<feature type="active site" description="Proton acceptor" evidence="1">
    <location>
        <position position="14"/>
    </location>
</feature>
<feature type="active site" description="Proton donor" evidence="1">
    <location>
        <position position="42"/>
    </location>
</feature>
<feature type="binding site" evidence="1">
    <location>
        <begin position="13"/>
        <end position="19"/>
    </location>
    <ligand>
        <name>GTP</name>
        <dbReference type="ChEBI" id="CHEBI:37565"/>
    </ligand>
</feature>
<feature type="binding site" description="in other chain" evidence="1">
    <location>
        <begin position="14"/>
        <end position="17"/>
    </location>
    <ligand>
        <name>IMP</name>
        <dbReference type="ChEBI" id="CHEBI:58053"/>
        <note>ligand shared between dimeric partners</note>
    </ligand>
</feature>
<feature type="binding site" evidence="1">
    <location>
        <position position="14"/>
    </location>
    <ligand>
        <name>Mg(2+)</name>
        <dbReference type="ChEBI" id="CHEBI:18420"/>
    </ligand>
</feature>
<feature type="binding site" description="in other chain" evidence="1">
    <location>
        <begin position="39"/>
        <end position="42"/>
    </location>
    <ligand>
        <name>IMP</name>
        <dbReference type="ChEBI" id="CHEBI:58053"/>
        <note>ligand shared between dimeric partners</note>
    </ligand>
</feature>
<feature type="binding site" evidence="1">
    <location>
        <begin position="41"/>
        <end position="43"/>
    </location>
    <ligand>
        <name>GTP</name>
        <dbReference type="ChEBI" id="CHEBI:37565"/>
    </ligand>
</feature>
<feature type="binding site" evidence="1">
    <location>
        <position position="41"/>
    </location>
    <ligand>
        <name>Mg(2+)</name>
        <dbReference type="ChEBI" id="CHEBI:18420"/>
    </ligand>
</feature>
<feature type="binding site" description="in other chain" evidence="1">
    <location>
        <position position="130"/>
    </location>
    <ligand>
        <name>IMP</name>
        <dbReference type="ChEBI" id="CHEBI:58053"/>
        <note>ligand shared between dimeric partners</note>
    </ligand>
</feature>
<feature type="binding site" evidence="1">
    <location>
        <position position="144"/>
    </location>
    <ligand>
        <name>IMP</name>
        <dbReference type="ChEBI" id="CHEBI:58053"/>
        <note>ligand shared between dimeric partners</note>
    </ligand>
</feature>
<feature type="binding site" description="in other chain" evidence="1">
    <location>
        <position position="225"/>
    </location>
    <ligand>
        <name>IMP</name>
        <dbReference type="ChEBI" id="CHEBI:58053"/>
        <note>ligand shared between dimeric partners</note>
    </ligand>
</feature>
<feature type="binding site" description="in other chain" evidence="1">
    <location>
        <position position="240"/>
    </location>
    <ligand>
        <name>IMP</name>
        <dbReference type="ChEBI" id="CHEBI:58053"/>
        <note>ligand shared between dimeric partners</note>
    </ligand>
</feature>
<feature type="binding site" evidence="1">
    <location>
        <begin position="300"/>
        <end position="306"/>
    </location>
    <ligand>
        <name>substrate</name>
    </ligand>
</feature>
<feature type="binding site" description="in other chain" evidence="1">
    <location>
        <position position="304"/>
    </location>
    <ligand>
        <name>IMP</name>
        <dbReference type="ChEBI" id="CHEBI:58053"/>
        <note>ligand shared between dimeric partners</note>
    </ligand>
</feature>
<feature type="binding site" evidence="1">
    <location>
        <position position="306"/>
    </location>
    <ligand>
        <name>GTP</name>
        <dbReference type="ChEBI" id="CHEBI:37565"/>
    </ligand>
</feature>
<feature type="binding site" evidence="1">
    <location>
        <begin position="332"/>
        <end position="334"/>
    </location>
    <ligand>
        <name>GTP</name>
        <dbReference type="ChEBI" id="CHEBI:37565"/>
    </ligand>
</feature>
<feature type="binding site" evidence="1">
    <location>
        <begin position="415"/>
        <end position="417"/>
    </location>
    <ligand>
        <name>GTP</name>
        <dbReference type="ChEBI" id="CHEBI:37565"/>
    </ligand>
</feature>
<gene>
    <name evidence="1" type="primary">purA</name>
    <name type="ordered locus">ECIAI39_4642</name>
</gene>
<comment type="function">
    <text evidence="1">Plays an important role in the de novo pathway of purine nucleotide biosynthesis. Catalyzes the first committed step in the biosynthesis of AMP from IMP.</text>
</comment>
<comment type="catalytic activity">
    <reaction evidence="1">
        <text>IMP + L-aspartate + GTP = N(6)-(1,2-dicarboxyethyl)-AMP + GDP + phosphate + 2 H(+)</text>
        <dbReference type="Rhea" id="RHEA:15753"/>
        <dbReference type="ChEBI" id="CHEBI:15378"/>
        <dbReference type="ChEBI" id="CHEBI:29991"/>
        <dbReference type="ChEBI" id="CHEBI:37565"/>
        <dbReference type="ChEBI" id="CHEBI:43474"/>
        <dbReference type="ChEBI" id="CHEBI:57567"/>
        <dbReference type="ChEBI" id="CHEBI:58053"/>
        <dbReference type="ChEBI" id="CHEBI:58189"/>
        <dbReference type="EC" id="6.3.4.4"/>
    </reaction>
</comment>
<comment type="cofactor">
    <cofactor evidence="1">
        <name>Mg(2+)</name>
        <dbReference type="ChEBI" id="CHEBI:18420"/>
    </cofactor>
    <text evidence="1">Binds 1 Mg(2+) ion per subunit.</text>
</comment>
<comment type="pathway">
    <text evidence="1">Purine metabolism; AMP biosynthesis via de novo pathway; AMP from IMP: step 1/2.</text>
</comment>
<comment type="subunit">
    <text evidence="1">Homodimer.</text>
</comment>
<comment type="subcellular location">
    <subcellularLocation>
        <location evidence="1">Cytoplasm</location>
    </subcellularLocation>
</comment>
<comment type="similarity">
    <text evidence="1">Belongs to the adenylosuccinate synthetase family.</text>
</comment>
<dbReference type="EC" id="6.3.4.4" evidence="1"/>
<dbReference type="EMBL" id="CU928164">
    <property type="protein sequence ID" value="CAR20740.1"/>
    <property type="molecule type" value="Genomic_DNA"/>
</dbReference>
<dbReference type="RefSeq" id="WP_000527955.1">
    <property type="nucleotide sequence ID" value="NC_011750.1"/>
</dbReference>
<dbReference type="RefSeq" id="YP_002410503.1">
    <property type="nucleotide sequence ID" value="NC_011750.1"/>
</dbReference>
<dbReference type="SMR" id="B7NTN3"/>
<dbReference type="STRING" id="585057.ECIAI39_4642"/>
<dbReference type="GeneID" id="75202411"/>
<dbReference type="KEGG" id="ect:ECIAI39_4642"/>
<dbReference type="PATRIC" id="fig|585057.6.peg.4788"/>
<dbReference type="HOGENOM" id="CLU_029848_0_0_6"/>
<dbReference type="UniPathway" id="UPA00075">
    <property type="reaction ID" value="UER00335"/>
</dbReference>
<dbReference type="Proteomes" id="UP000000749">
    <property type="component" value="Chromosome"/>
</dbReference>
<dbReference type="GO" id="GO:0005737">
    <property type="term" value="C:cytoplasm"/>
    <property type="evidence" value="ECO:0007669"/>
    <property type="project" value="UniProtKB-SubCell"/>
</dbReference>
<dbReference type="GO" id="GO:0004019">
    <property type="term" value="F:adenylosuccinate synthase activity"/>
    <property type="evidence" value="ECO:0007669"/>
    <property type="project" value="UniProtKB-UniRule"/>
</dbReference>
<dbReference type="GO" id="GO:0005525">
    <property type="term" value="F:GTP binding"/>
    <property type="evidence" value="ECO:0007669"/>
    <property type="project" value="UniProtKB-UniRule"/>
</dbReference>
<dbReference type="GO" id="GO:0000287">
    <property type="term" value="F:magnesium ion binding"/>
    <property type="evidence" value="ECO:0007669"/>
    <property type="project" value="UniProtKB-UniRule"/>
</dbReference>
<dbReference type="GO" id="GO:0044208">
    <property type="term" value="P:'de novo' AMP biosynthetic process"/>
    <property type="evidence" value="ECO:0007669"/>
    <property type="project" value="UniProtKB-UniRule"/>
</dbReference>
<dbReference type="GO" id="GO:0046040">
    <property type="term" value="P:IMP metabolic process"/>
    <property type="evidence" value="ECO:0007669"/>
    <property type="project" value="TreeGrafter"/>
</dbReference>
<dbReference type="CDD" id="cd03108">
    <property type="entry name" value="AdSS"/>
    <property type="match status" value="1"/>
</dbReference>
<dbReference type="FunFam" id="1.10.300.10:FF:000001">
    <property type="entry name" value="Adenylosuccinate synthetase"/>
    <property type="match status" value="1"/>
</dbReference>
<dbReference type="FunFam" id="3.90.170.10:FF:000001">
    <property type="entry name" value="Adenylosuccinate synthetase"/>
    <property type="match status" value="1"/>
</dbReference>
<dbReference type="Gene3D" id="3.40.440.10">
    <property type="entry name" value="Adenylosuccinate Synthetase, subunit A, domain 1"/>
    <property type="match status" value="1"/>
</dbReference>
<dbReference type="Gene3D" id="1.10.300.10">
    <property type="entry name" value="Adenylosuccinate Synthetase, subunit A, domain 2"/>
    <property type="match status" value="1"/>
</dbReference>
<dbReference type="Gene3D" id="3.90.170.10">
    <property type="entry name" value="Adenylosuccinate Synthetase, subunit A, domain 3"/>
    <property type="match status" value="1"/>
</dbReference>
<dbReference type="HAMAP" id="MF_00011">
    <property type="entry name" value="Adenylosucc_synth"/>
    <property type="match status" value="1"/>
</dbReference>
<dbReference type="InterPro" id="IPR018220">
    <property type="entry name" value="Adenylosuccin_syn_GTP-bd"/>
</dbReference>
<dbReference type="InterPro" id="IPR033128">
    <property type="entry name" value="Adenylosuccin_syn_Lys_AS"/>
</dbReference>
<dbReference type="InterPro" id="IPR042109">
    <property type="entry name" value="Adenylosuccinate_synth_dom1"/>
</dbReference>
<dbReference type="InterPro" id="IPR042110">
    <property type="entry name" value="Adenylosuccinate_synth_dom2"/>
</dbReference>
<dbReference type="InterPro" id="IPR042111">
    <property type="entry name" value="Adenylosuccinate_synth_dom3"/>
</dbReference>
<dbReference type="InterPro" id="IPR001114">
    <property type="entry name" value="Adenylosuccinate_synthetase"/>
</dbReference>
<dbReference type="InterPro" id="IPR027417">
    <property type="entry name" value="P-loop_NTPase"/>
</dbReference>
<dbReference type="NCBIfam" id="NF002223">
    <property type="entry name" value="PRK01117.1"/>
    <property type="match status" value="1"/>
</dbReference>
<dbReference type="NCBIfam" id="TIGR00184">
    <property type="entry name" value="purA"/>
    <property type="match status" value="1"/>
</dbReference>
<dbReference type="PANTHER" id="PTHR11846">
    <property type="entry name" value="ADENYLOSUCCINATE SYNTHETASE"/>
    <property type="match status" value="1"/>
</dbReference>
<dbReference type="PANTHER" id="PTHR11846:SF0">
    <property type="entry name" value="ADENYLOSUCCINATE SYNTHETASE"/>
    <property type="match status" value="1"/>
</dbReference>
<dbReference type="Pfam" id="PF00709">
    <property type="entry name" value="Adenylsucc_synt"/>
    <property type="match status" value="1"/>
</dbReference>
<dbReference type="SMART" id="SM00788">
    <property type="entry name" value="Adenylsucc_synt"/>
    <property type="match status" value="1"/>
</dbReference>
<dbReference type="SUPFAM" id="SSF52540">
    <property type="entry name" value="P-loop containing nucleoside triphosphate hydrolases"/>
    <property type="match status" value="1"/>
</dbReference>
<dbReference type="PROSITE" id="PS01266">
    <property type="entry name" value="ADENYLOSUCCIN_SYN_1"/>
    <property type="match status" value="1"/>
</dbReference>
<dbReference type="PROSITE" id="PS00513">
    <property type="entry name" value="ADENYLOSUCCIN_SYN_2"/>
    <property type="match status" value="1"/>
</dbReference>
<reference key="1">
    <citation type="journal article" date="2009" name="PLoS Genet.">
        <title>Organised genome dynamics in the Escherichia coli species results in highly diverse adaptive paths.</title>
        <authorList>
            <person name="Touchon M."/>
            <person name="Hoede C."/>
            <person name="Tenaillon O."/>
            <person name="Barbe V."/>
            <person name="Baeriswyl S."/>
            <person name="Bidet P."/>
            <person name="Bingen E."/>
            <person name="Bonacorsi S."/>
            <person name="Bouchier C."/>
            <person name="Bouvet O."/>
            <person name="Calteau A."/>
            <person name="Chiapello H."/>
            <person name="Clermont O."/>
            <person name="Cruveiller S."/>
            <person name="Danchin A."/>
            <person name="Diard M."/>
            <person name="Dossat C."/>
            <person name="Karoui M.E."/>
            <person name="Frapy E."/>
            <person name="Garry L."/>
            <person name="Ghigo J.M."/>
            <person name="Gilles A.M."/>
            <person name="Johnson J."/>
            <person name="Le Bouguenec C."/>
            <person name="Lescat M."/>
            <person name="Mangenot S."/>
            <person name="Martinez-Jehanne V."/>
            <person name="Matic I."/>
            <person name="Nassif X."/>
            <person name="Oztas S."/>
            <person name="Petit M.A."/>
            <person name="Pichon C."/>
            <person name="Rouy Z."/>
            <person name="Ruf C.S."/>
            <person name="Schneider D."/>
            <person name="Tourret J."/>
            <person name="Vacherie B."/>
            <person name="Vallenet D."/>
            <person name="Medigue C."/>
            <person name="Rocha E.P.C."/>
            <person name="Denamur E."/>
        </authorList>
    </citation>
    <scope>NUCLEOTIDE SEQUENCE [LARGE SCALE GENOMIC DNA]</scope>
    <source>
        <strain>IAI39 / ExPEC</strain>
    </source>
</reference>
<evidence type="ECO:0000255" key="1">
    <source>
        <dbReference type="HAMAP-Rule" id="MF_00011"/>
    </source>
</evidence>